<organism>
    <name type="scientific">Bacillus subtilis (strain 168)</name>
    <dbReference type="NCBI Taxonomy" id="224308"/>
    <lineage>
        <taxon>Bacteria</taxon>
        <taxon>Bacillati</taxon>
        <taxon>Bacillota</taxon>
        <taxon>Bacilli</taxon>
        <taxon>Bacillales</taxon>
        <taxon>Bacillaceae</taxon>
        <taxon>Bacillus</taxon>
    </lineage>
</organism>
<reference key="1">
    <citation type="submission" date="1997-03" db="EMBL/GenBank/DDBJ databases">
        <title>A 148 kbp sequence of the region between 35 and 47 degree of the Bacillus subtilis genome.</title>
        <authorList>
            <person name="Kasahara Y."/>
            <person name="Nakai S."/>
            <person name="Lee S."/>
            <person name="Sadaie Y."/>
            <person name="Ogasawara N."/>
        </authorList>
    </citation>
    <scope>NUCLEOTIDE SEQUENCE [GENOMIC DNA]</scope>
    <source>
        <strain>168</strain>
    </source>
</reference>
<reference key="2">
    <citation type="journal article" date="1997" name="Nature">
        <title>The complete genome sequence of the Gram-positive bacterium Bacillus subtilis.</title>
        <authorList>
            <person name="Kunst F."/>
            <person name="Ogasawara N."/>
            <person name="Moszer I."/>
            <person name="Albertini A.M."/>
            <person name="Alloni G."/>
            <person name="Azevedo V."/>
            <person name="Bertero M.G."/>
            <person name="Bessieres P."/>
            <person name="Bolotin A."/>
            <person name="Borchert S."/>
            <person name="Borriss R."/>
            <person name="Boursier L."/>
            <person name="Brans A."/>
            <person name="Braun M."/>
            <person name="Brignell S.C."/>
            <person name="Bron S."/>
            <person name="Brouillet S."/>
            <person name="Bruschi C.V."/>
            <person name="Caldwell B."/>
            <person name="Capuano V."/>
            <person name="Carter N.M."/>
            <person name="Choi S.-K."/>
            <person name="Codani J.-J."/>
            <person name="Connerton I.F."/>
            <person name="Cummings N.J."/>
            <person name="Daniel R.A."/>
            <person name="Denizot F."/>
            <person name="Devine K.M."/>
            <person name="Duesterhoeft A."/>
            <person name="Ehrlich S.D."/>
            <person name="Emmerson P.T."/>
            <person name="Entian K.-D."/>
            <person name="Errington J."/>
            <person name="Fabret C."/>
            <person name="Ferrari E."/>
            <person name="Foulger D."/>
            <person name="Fritz C."/>
            <person name="Fujita M."/>
            <person name="Fujita Y."/>
            <person name="Fuma S."/>
            <person name="Galizzi A."/>
            <person name="Galleron N."/>
            <person name="Ghim S.-Y."/>
            <person name="Glaser P."/>
            <person name="Goffeau A."/>
            <person name="Golightly E.J."/>
            <person name="Grandi G."/>
            <person name="Guiseppi G."/>
            <person name="Guy B.J."/>
            <person name="Haga K."/>
            <person name="Haiech J."/>
            <person name="Harwood C.R."/>
            <person name="Henaut A."/>
            <person name="Hilbert H."/>
            <person name="Holsappel S."/>
            <person name="Hosono S."/>
            <person name="Hullo M.-F."/>
            <person name="Itaya M."/>
            <person name="Jones L.-M."/>
            <person name="Joris B."/>
            <person name="Karamata D."/>
            <person name="Kasahara Y."/>
            <person name="Klaerr-Blanchard M."/>
            <person name="Klein C."/>
            <person name="Kobayashi Y."/>
            <person name="Koetter P."/>
            <person name="Koningstein G."/>
            <person name="Krogh S."/>
            <person name="Kumano M."/>
            <person name="Kurita K."/>
            <person name="Lapidus A."/>
            <person name="Lardinois S."/>
            <person name="Lauber J."/>
            <person name="Lazarevic V."/>
            <person name="Lee S.-M."/>
            <person name="Levine A."/>
            <person name="Liu H."/>
            <person name="Masuda S."/>
            <person name="Mauel C."/>
            <person name="Medigue C."/>
            <person name="Medina N."/>
            <person name="Mellado R.P."/>
            <person name="Mizuno M."/>
            <person name="Moestl D."/>
            <person name="Nakai S."/>
            <person name="Noback M."/>
            <person name="Noone D."/>
            <person name="O'Reilly M."/>
            <person name="Ogawa K."/>
            <person name="Ogiwara A."/>
            <person name="Oudega B."/>
            <person name="Park S.-H."/>
            <person name="Parro V."/>
            <person name="Pohl T.M."/>
            <person name="Portetelle D."/>
            <person name="Porwollik S."/>
            <person name="Prescott A.M."/>
            <person name="Presecan E."/>
            <person name="Pujic P."/>
            <person name="Purnelle B."/>
            <person name="Rapoport G."/>
            <person name="Rey M."/>
            <person name="Reynolds S."/>
            <person name="Rieger M."/>
            <person name="Rivolta C."/>
            <person name="Rocha E."/>
            <person name="Roche B."/>
            <person name="Rose M."/>
            <person name="Sadaie Y."/>
            <person name="Sato T."/>
            <person name="Scanlan E."/>
            <person name="Schleich S."/>
            <person name="Schroeter R."/>
            <person name="Scoffone F."/>
            <person name="Sekiguchi J."/>
            <person name="Sekowska A."/>
            <person name="Seror S.J."/>
            <person name="Serror P."/>
            <person name="Shin B.-S."/>
            <person name="Soldo B."/>
            <person name="Sorokin A."/>
            <person name="Tacconi E."/>
            <person name="Takagi T."/>
            <person name="Takahashi H."/>
            <person name="Takemaru K."/>
            <person name="Takeuchi M."/>
            <person name="Tamakoshi A."/>
            <person name="Tanaka T."/>
            <person name="Terpstra P."/>
            <person name="Tognoni A."/>
            <person name="Tosato V."/>
            <person name="Uchiyama S."/>
            <person name="Vandenbol M."/>
            <person name="Vannier F."/>
            <person name="Vassarotti A."/>
            <person name="Viari A."/>
            <person name="Wambutt R."/>
            <person name="Wedler E."/>
            <person name="Wedler H."/>
            <person name="Weitzenegger T."/>
            <person name="Winters P."/>
            <person name="Wipat A."/>
            <person name="Yamamoto H."/>
            <person name="Yamane K."/>
            <person name="Yasumoto K."/>
            <person name="Yata K."/>
            <person name="Yoshida K."/>
            <person name="Yoshikawa H.-F."/>
            <person name="Zumstein E."/>
            <person name="Yoshikawa H."/>
            <person name="Danchin A."/>
        </authorList>
    </citation>
    <scope>NUCLEOTIDE SEQUENCE [LARGE SCALE GENOMIC DNA]</scope>
    <source>
        <strain>168</strain>
    </source>
</reference>
<reference key="3">
    <citation type="journal article" date="1997" name="Microbiology">
        <title>Identification by PCR of genes encoding multiple response regulators.</title>
        <authorList>
            <person name="Morel-Deville F."/>
            <person name="Ehrlich S.D."/>
            <person name="Morel P."/>
        </authorList>
    </citation>
    <scope>NUCLEOTIDE SEQUENCE [GENOMIC DNA] OF 14-101</scope>
    <source>
        <strain>SB202</strain>
    </source>
</reference>
<reference key="4">
    <citation type="journal article" date="2000" name="Microbiology">
        <title>Regulation of the transport system for C4-dicarboxylic acids in Bacillus subtilis.</title>
        <authorList>
            <person name="Asai K."/>
            <person name="Baik S.-H."/>
            <person name="Kasahara Y."/>
            <person name="Moriya S."/>
            <person name="Ogasawara N."/>
        </authorList>
    </citation>
    <scope>FUNCTION</scope>
    <scope>GENE NAME</scope>
    <source>
        <strain>168</strain>
    </source>
</reference>
<reference key="5">
    <citation type="journal article" date="2001" name="J. Bacteriol.">
        <title>Comprehensive DNA microarray analysis of Bacillus subtilis two-component regulatory systems.</title>
        <authorList>
            <person name="Kobayashi K."/>
            <person name="Ogura M."/>
            <person name="Yamaguchi H."/>
            <person name="Yoshida K."/>
            <person name="Ogasawara N."/>
            <person name="Tanaka T."/>
            <person name="Fujita Y."/>
        </authorList>
    </citation>
    <scope>FUNCTION</scope>
</reference>
<dbReference type="EMBL" id="AB001488">
    <property type="protein sequence ID" value="BAA19283.1"/>
    <property type="molecule type" value="Genomic_DNA"/>
</dbReference>
<dbReference type="EMBL" id="AL009126">
    <property type="protein sequence ID" value="CAB12253.1"/>
    <property type="molecule type" value="Genomic_DNA"/>
</dbReference>
<dbReference type="EMBL" id="U82580">
    <property type="protein sequence ID" value="AAB41751.1"/>
    <property type="molecule type" value="Genomic_DNA"/>
</dbReference>
<dbReference type="PIR" id="B69771">
    <property type="entry name" value="B69771"/>
</dbReference>
<dbReference type="RefSeq" id="NP_388327.1">
    <property type="nucleotide sequence ID" value="NC_000964.3"/>
</dbReference>
<dbReference type="RefSeq" id="WP_003234347.1">
    <property type="nucleotide sequence ID" value="NZ_OZ025638.1"/>
</dbReference>
<dbReference type="SMR" id="P96602"/>
<dbReference type="FunCoup" id="P96602">
    <property type="interactions" value="259"/>
</dbReference>
<dbReference type="STRING" id="224308.BSU04460"/>
<dbReference type="PaxDb" id="224308-BSU04460"/>
<dbReference type="EnsemblBacteria" id="CAB12253">
    <property type="protein sequence ID" value="CAB12253"/>
    <property type="gene ID" value="BSU_04460"/>
</dbReference>
<dbReference type="GeneID" id="940148"/>
<dbReference type="KEGG" id="bsu:BSU04460"/>
<dbReference type="PATRIC" id="fig|224308.179.peg.472"/>
<dbReference type="eggNOG" id="COG4565">
    <property type="taxonomic scope" value="Bacteria"/>
</dbReference>
<dbReference type="InParanoid" id="P96602"/>
<dbReference type="OrthoDB" id="9759232at2"/>
<dbReference type="PhylomeDB" id="P96602"/>
<dbReference type="BioCyc" id="BSUB:BSU04460-MONOMER"/>
<dbReference type="Proteomes" id="UP000001570">
    <property type="component" value="Chromosome"/>
</dbReference>
<dbReference type="GO" id="GO:0005737">
    <property type="term" value="C:cytoplasm"/>
    <property type="evidence" value="ECO:0007669"/>
    <property type="project" value="UniProtKB-SubCell"/>
</dbReference>
<dbReference type="GO" id="GO:0003677">
    <property type="term" value="F:DNA binding"/>
    <property type="evidence" value="ECO:0007669"/>
    <property type="project" value="UniProtKB-KW"/>
</dbReference>
<dbReference type="GO" id="GO:0003700">
    <property type="term" value="F:DNA-binding transcription factor activity"/>
    <property type="evidence" value="ECO:0007669"/>
    <property type="project" value="InterPro"/>
</dbReference>
<dbReference type="GO" id="GO:0000156">
    <property type="term" value="F:phosphorelay response regulator activity"/>
    <property type="evidence" value="ECO:0000318"/>
    <property type="project" value="GO_Central"/>
</dbReference>
<dbReference type="CDD" id="cd19925">
    <property type="entry name" value="REC_citrate_TCS"/>
    <property type="match status" value="1"/>
</dbReference>
<dbReference type="Gene3D" id="3.40.50.2300">
    <property type="match status" value="1"/>
</dbReference>
<dbReference type="Gene3D" id="1.10.10.10">
    <property type="entry name" value="Winged helix-like DNA-binding domain superfamily/Winged helix DNA-binding domain"/>
    <property type="match status" value="1"/>
</dbReference>
<dbReference type="InterPro" id="IPR051271">
    <property type="entry name" value="2C-system_Tx_regulators"/>
</dbReference>
<dbReference type="InterPro" id="IPR011006">
    <property type="entry name" value="CheY-like_superfamily"/>
</dbReference>
<dbReference type="InterPro" id="IPR048714">
    <property type="entry name" value="DpiA-like_HTH"/>
</dbReference>
<dbReference type="InterPro" id="IPR024187">
    <property type="entry name" value="Sig_transdc_resp-reg_cit/mal"/>
</dbReference>
<dbReference type="InterPro" id="IPR001789">
    <property type="entry name" value="Sig_transdc_resp-reg_receiver"/>
</dbReference>
<dbReference type="InterPro" id="IPR036388">
    <property type="entry name" value="WH-like_DNA-bd_sf"/>
</dbReference>
<dbReference type="InterPro" id="IPR036390">
    <property type="entry name" value="WH_DNA-bd_sf"/>
</dbReference>
<dbReference type="PANTHER" id="PTHR45526:SF1">
    <property type="entry name" value="TRANSCRIPTIONAL REGULATORY PROTEIN DCUR-RELATED"/>
    <property type="match status" value="1"/>
</dbReference>
<dbReference type="PANTHER" id="PTHR45526">
    <property type="entry name" value="TRANSCRIPTIONAL REGULATORY PROTEIN DPIA"/>
    <property type="match status" value="1"/>
</dbReference>
<dbReference type="Pfam" id="PF20714">
    <property type="entry name" value="HTH_64"/>
    <property type="match status" value="1"/>
</dbReference>
<dbReference type="Pfam" id="PF00072">
    <property type="entry name" value="Response_reg"/>
    <property type="match status" value="1"/>
</dbReference>
<dbReference type="PIRSF" id="PIRSF006171">
    <property type="entry name" value="RR_citrat_malat"/>
    <property type="match status" value="1"/>
</dbReference>
<dbReference type="SMART" id="SM00448">
    <property type="entry name" value="REC"/>
    <property type="match status" value="1"/>
</dbReference>
<dbReference type="SUPFAM" id="SSF52172">
    <property type="entry name" value="CheY-like"/>
    <property type="match status" value="1"/>
</dbReference>
<dbReference type="SUPFAM" id="SSF46785">
    <property type="entry name" value="Winged helix' DNA-binding domain"/>
    <property type="match status" value="1"/>
</dbReference>
<dbReference type="PROSITE" id="PS50110">
    <property type="entry name" value="RESPONSE_REGULATORY"/>
    <property type="match status" value="1"/>
</dbReference>
<accession>P96602</accession>
<accession>P94503</accession>
<keyword id="KW-0010">Activator</keyword>
<keyword id="KW-0963">Cytoplasm</keyword>
<keyword id="KW-0238">DNA-binding</keyword>
<keyword id="KW-0597">Phosphoprotein</keyword>
<keyword id="KW-1185">Reference proteome</keyword>
<keyword id="KW-0804">Transcription</keyword>
<keyword id="KW-0805">Transcription regulation</keyword>
<keyword id="KW-0902">Two-component regulatory system</keyword>
<name>DCTR_BACSU</name>
<evidence type="ECO:0000255" key="1"/>
<evidence type="ECO:0000255" key="2">
    <source>
        <dbReference type="PROSITE-ProRule" id="PRU00169"/>
    </source>
</evidence>
<evidence type="ECO:0000269" key="3">
    <source>
    </source>
</evidence>
<evidence type="ECO:0000269" key="4">
    <source>
    </source>
</evidence>
<evidence type="ECO:0000305" key="5"/>
<gene>
    <name type="primary">dctR</name>
    <name type="synonym">ydbG</name>
    <name type="ordered locus">BSU04460</name>
</gene>
<feature type="chain" id="PRO_0000081092" description="Probable C4-dicarboxylate response regulator DctR">
    <location>
        <begin position="1"/>
        <end position="226"/>
    </location>
</feature>
<feature type="domain" description="Response regulatory" evidence="2">
    <location>
        <begin position="7"/>
        <end position="123"/>
    </location>
</feature>
<feature type="DNA-binding region" description="H-T-H motif" evidence="1">
    <location>
        <begin position="179"/>
        <end position="198"/>
    </location>
</feature>
<feature type="modified residue" description="4-aspartylphosphate" evidence="2">
    <location>
        <position position="58"/>
    </location>
</feature>
<feature type="sequence conflict" description="In Ref. 3; AAB41751." evidence="5" ref="3">
    <original>F</original>
    <variation>I</variation>
    <location>
        <position position="24"/>
    </location>
</feature>
<comment type="function">
    <text evidence="3 4">Member of the two-component regulatory system DctS/DctR. Essential for expression of dctP.</text>
</comment>
<comment type="subcellular location">
    <subcellularLocation>
        <location evidence="5">Cytoplasm</location>
    </subcellularLocation>
</comment>
<comment type="PTM">
    <text evidence="5">Phosphorylated by DctS.</text>
</comment>
<sequence length="226" mass="25539">MARKEWKVLLIEDDPMVQEVNKDFITTVKGVTVCATAGNGEEGMKLIKEEQPDLVILDVYMPKKDGIKTLQEIRKQKLEVDVIVVSAAKDKETISLMLQNGAVDYILKPFKLERMRQALEKYKQYKQKIEANDTLSQEQLDAILNIPQQAVQDLPKGLNHFTMNEVTAFLKQQTASLSAEEVAKALGIARVTARRYLDYLEKTGIIKLDVQYGGVGRPVNRYVLKG</sequence>
<protein>
    <recommendedName>
        <fullName>Probable C4-dicarboxylate response regulator DctR</fullName>
    </recommendedName>
</protein>
<proteinExistence type="inferred from homology"/>